<feature type="chain" id="PRO_0000066150" description="YAP1-binding protein 1">
    <location>
        <begin position="1"/>
        <end position="674"/>
    </location>
</feature>
<feature type="sequence variant" description="In strain: W303-1a.">
    <original>I</original>
    <variation>L</variation>
    <location>
        <position position="7"/>
    </location>
</feature>
<feature type="sequence variant" description="In strain: W303-1a.">
    <original>F</original>
    <variation>V</variation>
    <location>
        <position position="328"/>
    </location>
</feature>
<feature type="sequence variant" description="In strain: W303-1a.">
    <original>K</original>
    <variation>E</variation>
    <location>
        <position position="343"/>
    </location>
</feature>
<feature type="sequence variant" description="In strain: W303-1a.">
    <original>N</original>
    <variation>D</variation>
    <location>
        <position position="570"/>
    </location>
</feature>
<evidence type="ECO:0000269" key="1">
    <source>
    </source>
</evidence>
<evidence type="ECO:0000269" key="2">
    <source>
    </source>
</evidence>
<evidence type="ECO:0000269" key="3">
    <source>
    </source>
</evidence>
<evidence type="ECO:0000269" key="4">
    <source>
    </source>
</evidence>
<evidence type="ECO:0000269" key="5">
    <source>
    </source>
</evidence>
<evidence type="ECO:0000303" key="6">
    <source>
    </source>
</evidence>
<evidence type="ECO:0000305" key="7"/>
<evidence type="ECO:0000312" key="8">
    <source>
        <dbReference type="SGD" id="S000000420"/>
    </source>
</evidence>
<organism>
    <name type="scientific">Saccharomyces cerevisiae (strain ATCC 204508 / S288c)</name>
    <name type="common">Baker's yeast</name>
    <dbReference type="NCBI Taxonomy" id="559292"/>
    <lineage>
        <taxon>Eukaryota</taxon>
        <taxon>Fungi</taxon>
        <taxon>Dikarya</taxon>
        <taxon>Ascomycota</taxon>
        <taxon>Saccharomycotina</taxon>
        <taxon>Saccharomycetes</taxon>
        <taxon>Saccharomycetales</taxon>
        <taxon>Saccharomycetaceae</taxon>
        <taxon>Saccharomyces</taxon>
    </lineage>
</organism>
<reference key="1">
    <citation type="journal article" date="1994" name="EMBO J.">
        <title>Complete DNA sequence of yeast chromosome II.</title>
        <authorList>
            <person name="Feldmann H."/>
            <person name="Aigle M."/>
            <person name="Aljinovic G."/>
            <person name="Andre B."/>
            <person name="Baclet M.C."/>
            <person name="Barthe C."/>
            <person name="Baur A."/>
            <person name="Becam A.-M."/>
            <person name="Biteau N."/>
            <person name="Boles E."/>
            <person name="Brandt T."/>
            <person name="Brendel M."/>
            <person name="Brueckner M."/>
            <person name="Bussereau F."/>
            <person name="Christiansen C."/>
            <person name="Contreras R."/>
            <person name="Crouzet M."/>
            <person name="Cziepluch C."/>
            <person name="Demolis N."/>
            <person name="Delaveau T."/>
            <person name="Doignon F."/>
            <person name="Domdey H."/>
            <person name="Duesterhus S."/>
            <person name="Dubois E."/>
            <person name="Dujon B."/>
            <person name="El Bakkoury M."/>
            <person name="Entian K.-D."/>
            <person name="Feuermann M."/>
            <person name="Fiers W."/>
            <person name="Fobo G.M."/>
            <person name="Fritz C."/>
            <person name="Gassenhuber J."/>
            <person name="Glansdorff N."/>
            <person name="Goffeau A."/>
            <person name="Grivell L.A."/>
            <person name="de Haan M."/>
            <person name="Hein C."/>
            <person name="Herbert C.J."/>
            <person name="Hollenberg C.P."/>
            <person name="Holmstroem K."/>
            <person name="Jacq C."/>
            <person name="Jacquet M."/>
            <person name="Jauniaux J.-C."/>
            <person name="Jonniaux J.-L."/>
            <person name="Kallesoee T."/>
            <person name="Kiesau P."/>
            <person name="Kirchrath L."/>
            <person name="Koetter P."/>
            <person name="Korol S."/>
            <person name="Liebl S."/>
            <person name="Logghe M."/>
            <person name="Lohan A.J.E."/>
            <person name="Louis E.J."/>
            <person name="Li Z.Y."/>
            <person name="Maat M.J."/>
            <person name="Mallet L."/>
            <person name="Mannhaupt G."/>
            <person name="Messenguy F."/>
            <person name="Miosga T."/>
            <person name="Molemans F."/>
            <person name="Mueller S."/>
            <person name="Nasr F."/>
            <person name="Obermaier B."/>
            <person name="Perea J."/>
            <person name="Pierard A."/>
            <person name="Piravandi E."/>
            <person name="Pohl F.M."/>
            <person name="Pohl T.M."/>
            <person name="Potier S."/>
            <person name="Proft M."/>
            <person name="Purnelle B."/>
            <person name="Ramezani Rad M."/>
            <person name="Rieger M."/>
            <person name="Rose M."/>
            <person name="Schaaff-Gerstenschlaeger I."/>
            <person name="Scherens B."/>
            <person name="Schwarzlose C."/>
            <person name="Skala J."/>
            <person name="Slonimski P.P."/>
            <person name="Smits P.H.M."/>
            <person name="Souciet J.-L."/>
            <person name="Steensma H.Y."/>
            <person name="Stucka R."/>
            <person name="Urrestarazu L.A."/>
            <person name="van der Aart Q.J.M."/>
            <person name="Van Dyck L."/>
            <person name="Vassarotti A."/>
            <person name="Vetter I."/>
            <person name="Vierendeels F."/>
            <person name="Vissers S."/>
            <person name="Wagner G."/>
            <person name="de Wergifosse P."/>
            <person name="Wolfe K.H."/>
            <person name="Zagulski M."/>
            <person name="Zimmermann F.K."/>
            <person name="Mewes H.-W."/>
            <person name="Kleine K."/>
        </authorList>
    </citation>
    <scope>NUCLEOTIDE SEQUENCE [LARGE SCALE GENOMIC DNA]</scope>
    <source>
        <strain>ATCC 204508 / S288c</strain>
    </source>
</reference>
<reference key="2">
    <citation type="journal article" date="2014" name="G3 (Bethesda)">
        <title>The reference genome sequence of Saccharomyces cerevisiae: Then and now.</title>
        <authorList>
            <person name="Engel S.R."/>
            <person name="Dietrich F.S."/>
            <person name="Fisk D.G."/>
            <person name="Binkley G."/>
            <person name="Balakrishnan R."/>
            <person name="Costanzo M.C."/>
            <person name="Dwight S.S."/>
            <person name="Hitz B.C."/>
            <person name="Karra K."/>
            <person name="Nash R.S."/>
            <person name="Weng S."/>
            <person name="Wong E.D."/>
            <person name="Lloyd P."/>
            <person name="Skrzypek M.S."/>
            <person name="Miyasato S.R."/>
            <person name="Simison M."/>
            <person name="Cherry J.M."/>
        </authorList>
    </citation>
    <scope>GENOME REANNOTATION</scope>
    <source>
        <strain>ATCC 204508 / S288c</strain>
    </source>
</reference>
<reference key="3">
    <citation type="journal article" date="2001" name="Proc. Natl. Acad. Sci. U.S.A.">
        <title>A comprehensive two-hybrid analysis to explore the yeast protein interactome.</title>
        <authorList>
            <person name="Ito T."/>
            <person name="Chiba T."/>
            <person name="Ozawa R."/>
            <person name="Yoshida M."/>
            <person name="Hattori M."/>
            <person name="Sakaki Y."/>
        </authorList>
    </citation>
    <scope>FUNCTION</scope>
    <scope>INTERACTION WITH NUP116</scope>
</reference>
<reference key="4">
    <citation type="journal article" date="2003" name="J. Biol. Chem.">
        <title>Ybp1 is required for the hydrogen peroxide-induced oxidation of the Yap1 transcription factor.</title>
        <authorList>
            <person name="Veal E.A."/>
            <person name="Ross S.J."/>
            <person name="Malakasi P."/>
            <person name="Peacock E."/>
            <person name="Morgan B.A."/>
        </authorList>
    </citation>
    <scope>FUNCTION</scope>
    <scope>OXIDATIVE STRESS RESPONSE</scope>
</reference>
<reference key="5">
    <citation type="journal article" date="2003" name="Nature">
        <title>Global analysis of protein localization in budding yeast.</title>
        <authorList>
            <person name="Huh W.-K."/>
            <person name="Falvo J.V."/>
            <person name="Gerke L.C."/>
            <person name="Carroll A.S."/>
            <person name="Howson R.W."/>
            <person name="Weissman J.S."/>
            <person name="O'Shea E.K."/>
        </authorList>
    </citation>
    <scope>SUBCELLULAR LOCATION [LARGE SCALE ANALYSIS]</scope>
</reference>
<reference key="6">
    <citation type="journal article" date="2003" name="Nature">
        <title>Global analysis of protein expression in yeast.</title>
        <authorList>
            <person name="Ghaemmaghami S."/>
            <person name="Huh W.-K."/>
            <person name="Bower K."/>
            <person name="Howson R.W."/>
            <person name="Belle A."/>
            <person name="Dephoure N."/>
            <person name="O'Shea E.K."/>
            <person name="Weissman J.S."/>
        </authorList>
    </citation>
    <scope>LEVEL OF PROTEIN EXPRESSION [LARGE SCALE ANALYSIS]</scope>
</reference>
<reference key="7">
    <citation type="journal article" date="2004" name="Eukaryot. Cell">
        <title>YBP1 and its homologue YBP2/YBH1 influence oxidative-stress tolerance by nonidentical mechanisms in Saccharomyces cerevisiae.</title>
        <authorList>
            <person name="Gulshan K."/>
            <person name="Rovinsky S.A."/>
            <person name="Moye-Rowley W.S."/>
        </authorList>
    </citation>
    <scope>FUNCTION</scope>
    <scope>SUBCELLULAR LOCATION</scope>
    <scope>INTERACTION WITH YAP1</scope>
</reference>
<name>YBP1_YEAST</name>
<keyword id="KW-0963">Cytoplasm</keyword>
<keyword id="KW-1185">Reference proteome</keyword>
<keyword id="KW-0346">Stress response</keyword>
<sequence length="674" mass="77741">MEPIDDILFEVTDAFKTQKEDLLELVTLIDIYGEQVNQEGSYEEKTRFIETLNTLLEDNPSTTGEIGWDLPKGLLKFLSKDNVDVNGRLGTNMIVQGVMKCFYAISIQGEPKKCLITGLELLSSLCSKDFSKSDQQNKEDFVDKKANTLPPEGVIENSSNRKDFPSYGESKSSNEFFLKLKSYILFEFIGASLKRISTLFPSKYLGAAVSTIEKFVYSHADTFEDALFLLRRVYTFCRNYIPPDPPKDIQLNEDFTREMFDKVVEEESELQVRLLRRLCTFGISTPIKTVTTNADVKYYCALNQQKFELSAYYTEYLELFCRYYQMAFSLDVDIEGEFQNVIKECRIIYKSVPQEISAVNDEAKLVLERMVYKLAYTFEVQKAAKEKNVGLDYNGVILFSGIHYLETNQHLVKEMNITDAIYLYLRFTTPSLYSKVYYNVAVESVSRYWLWYAITTEPLEDVKKELKNLSVFVTKTLLHVLLQKNCIQVNQQLRMITFTLLTRLLCLIPEKVAFEFILDVLKTSPLPLAKTSVLCVFKDLSRRRISTKDNDSETDLIVEKLSKLKVNDSNKAQQSNIRHYIQLDSSKMKAVHDCCLQTIQDSFTADAKKSDILLLLTYLNIFIVLKKTWDEDLLKIVCSKIDSNLKSVEPDKLPKYKEIVDKNESLNDYFTGIK</sequence>
<comment type="function">
    <text evidence="1 2 5">Involved in oxidative stress response and redox homeostasis. Required for hydrogen peroxide-induced oxidation and nuclear localization (activation) of YAP1. Functions probably in concert with HYP1/GPX3, the actual YAP1 modifying enzyme. YBP1 is not required for HYP1/GPX3-independent, diamide-induced oxidation of YAP1.</text>
</comment>
<comment type="subunit">
    <text evidence="1 5">Interacts with YAP1. Forms a peroxide stress induced complex with YAP1 in the cytoplasm. Systematic proteome-wide 2-hybrid interaction studies suggest that YAP1, HYR1/GPX3, and YBP1 all interact with the nuclear pore complex subunit NUP116, which is involved in nucleocytoplasmic transport.</text>
</comment>
<comment type="interaction">
    <interactant intactId="EBI-20985">
        <id>P38315</id>
    </interactant>
    <interactant intactId="EBI-31265">
        <id>P19880</id>
        <label>YAP1</label>
    </interactant>
    <organismsDiffer>false</organismsDiffer>
    <experiments>3</experiments>
</comment>
<comment type="subcellular location">
    <subcellularLocation>
        <location evidence="3 5">Cytoplasm</location>
    </subcellularLocation>
</comment>
<comment type="miscellaneous">
    <text evidence="4">Present with 3100 molecules/cell in log phase SD medium.</text>
</comment>
<comment type="similarity">
    <text evidence="7">Belongs to the YBP1 family.</text>
</comment>
<comment type="caution">
    <text evidence="7">YBP1 encoded by the widely used laboratory strain W303-1a is only partially functional, probably due to four amino acid substitutions.</text>
</comment>
<accession>P38315</accession>
<accession>D6VQL2</accession>
<gene>
    <name evidence="6" type="primary">YBP1</name>
    <name evidence="8" type="ordered locus">YBR216C</name>
    <name evidence="8" type="ORF">YBR1505</name>
</gene>
<proteinExistence type="evidence at protein level"/>
<dbReference type="EMBL" id="Z36085">
    <property type="protein sequence ID" value="CAA85180.1"/>
    <property type="molecule type" value="Genomic_DNA"/>
</dbReference>
<dbReference type="EMBL" id="BK006936">
    <property type="protein sequence ID" value="DAA07332.1"/>
    <property type="molecule type" value="Genomic_DNA"/>
</dbReference>
<dbReference type="PIR" id="S46092">
    <property type="entry name" value="S46092"/>
</dbReference>
<dbReference type="RefSeq" id="NP_009775.3">
    <property type="nucleotide sequence ID" value="NM_001178564.3"/>
</dbReference>
<dbReference type="BioGRID" id="32913">
    <property type="interactions" value="115"/>
</dbReference>
<dbReference type="DIP" id="DIP-4499N"/>
<dbReference type="FunCoup" id="P38315">
    <property type="interactions" value="45"/>
</dbReference>
<dbReference type="IntAct" id="P38315">
    <property type="interactions" value="19"/>
</dbReference>
<dbReference type="MINT" id="P38315"/>
<dbReference type="STRING" id="4932.YBR216C"/>
<dbReference type="iPTMnet" id="P38315"/>
<dbReference type="PaxDb" id="4932-YBR216C"/>
<dbReference type="PeptideAtlas" id="P38315"/>
<dbReference type="EnsemblFungi" id="YBR216C_mRNA">
    <property type="protein sequence ID" value="YBR216C"/>
    <property type="gene ID" value="YBR216C"/>
</dbReference>
<dbReference type="GeneID" id="852517"/>
<dbReference type="KEGG" id="sce:YBR216C"/>
<dbReference type="AGR" id="SGD:S000000420"/>
<dbReference type="SGD" id="S000000420">
    <property type="gene designation" value="YBP1"/>
</dbReference>
<dbReference type="VEuPathDB" id="FungiDB:YBR216C"/>
<dbReference type="eggNOG" id="ENOG502QWJN">
    <property type="taxonomic scope" value="Eukaryota"/>
</dbReference>
<dbReference type="GeneTree" id="ENSGT00940000176740"/>
<dbReference type="HOGENOM" id="CLU_024514_0_0_1"/>
<dbReference type="InParanoid" id="P38315"/>
<dbReference type="OMA" id="TYEIGWD"/>
<dbReference type="OrthoDB" id="5396786at2759"/>
<dbReference type="BioCyc" id="YEAST:G3O-29153-MONOMER"/>
<dbReference type="BioGRID-ORCS" id="852517">
    <property type="hits" value="0 hits in 10 CRISPR screens"/>
</dbReference>
<dbReference type="PRO" id="PR:P38315"/>
<dbReference type="Proteomes" id="UP000002311">
    <property type="component" value="Chromosome II"/>
</dbReference>
<dbReference type="RNAct" id="P38315">
    <property type="molecule type" value="protein"/>
</dbReference>
<dbReference type="GO" id="GO:0005737">
    <property type="term" value="C:cytoplasm"/>
    <property type="evidence" value="ECO:0007005"/>
    <property type="project" value="SGD"/>
</dbReference>
<dbReference type="GO" id="GO:0140297">
    <property type="term" value="F:DNA-binding transcription factor binding"/>
    <property type="evidence" value="ECO:0000314"/>
    <property type="project" value="SGD"/>
</dbReference>
<dbReference type="GO" id="GO:0015035">
    <property type="term" value="F:protein-disulfide reductase activity"/>
    <property type="evidence" value="ECO:0000314"/>
    <property type="project" value="SGD"/>
</dbReference>
<dbReference type="GO" id="GO:0034599">
    <property type="term" value="P:cellular response to oxidative stress"/>
    <property type="evidence" value="ECO:0000318"/>
    <property type="project" value="GO_Central"/>
</dbReference>
<dbReference type="GO" id="GO:0065003">
    <property type="term" value="P:protein-containing complex assembly"/>
    <property type="evidence" value="ECO:0000314"/>
    <property type="project" value="SGD"/>
</dbReference>
<dbReference type="InterPro" id="IPR013877">
    <property type="entry name" value="YAP-bd/ALF4/Glomulin"/>
</dbReference>
<dbReference type="InterPro" id="IPR040347">
    <property type="entry name" value="YBP1/2"/>
</dbReference>
<dbReference type="PANTHER" id="PTHR28020">
    <property type="entry name" value="YAP1-BINDING PROTEIN 1-RELATED"/>
    <property type="match status" value="1"/>
</dbReference>
<dbReference type="PANTHER" id="PTHR28020:SF1">
    <property type="entry name" value="YAP1-BINDING PROTEIN 1-RELATED"/>
    <property type="match status" value="1"/>
</dbReference>
<dbReference type="Pfam" id="PF08568">
    <property type="entry name" value="Kinetochor_Ybp2"/>
    <property type="match status" value="1"/>
</dbReference>
<protein>
    <recommendedName>
        <fullName>YAP1-binding protein 1</fullName>
    </recommendedName>
    <alternativeName>
        <fullName>Activator of YAP1</fullName>
    </alternativeName>
</protein>